<comment type="catalytic activity">
    <reaction evidence="1">
        <text>2-formamido-N(1)-(5-O-phospho-beta-D-ribosyl)acetamidine + ATP = 5-amino-1-(5-phospho-beta-D-ribosyl)imidazole + ADP + phosphate + H(+)</text>
        <dbReference type="Rhea" id="RHEA:23032"/>
        <dbReference type="ChEBI" id="CHEBI:15378"/>
        <dbReference type="ChEBI" id="CHEBI:30616"/>
        <dbReference type="ChEBI" id="CHEBI:43474"/>
        <dbReference type="ChEBI" id="CHEBI:137981"/>
        <dbReference type="ChEBI" id="CHEBI:147287"/>
        <dbReference type="ChEBI" id="CHEBI:456216"/>
        <dbReference type="EC" id="6.3.3.1"/>
    </reaction>
</comment>
<comment type="pathway">
    <text evidence="1">Purine metabolism; IMP biosynthesis via de novo pathway; 5-amino-1-(5-phospho-D-ribosyl)imidazole from N(2)-formyl-N(1)-(5-phospho-D-ribosyl)glycinamide: step 2/2.</text>
</comment>
<comment type="subcellular location">
    <subcellularLocation>
        <location evidence="1">Cytoplasm</location>
    </subcellularLocation>
</comment>
<comment type="similarity">
    <text evidence="1">Belongs to the AIR synthase family.</text>
</comment>
<name>PUR5_CERS1</name>
<reference key="1">
    <citation type="submission" date="2007-02" db="EMBL/GenBank/DDBJ databases">
        <title>Complete sequence of chromosome 1 of Rhodobacter sphaeroides ATCC 17029.</title>
        <authorList>
            <person name="Copeland A."/>
            <person name="Lucas S."/>
            <person name="Lapidus A."/>
            <person name="Barry K."/>
            <person name="Detter J.C."/>
            <person name="Glavina del Rio T."/>
            <person name="Hammon N."/>
            <person name="Israni S."/>
            <person name="Dalin E."/>
            <person name="Tice H."/>
            <person name="Pitluck S."/>
            <person name="Kiss H."/>
            <person name="Brettin T."/>
            <person name="Bruce D."/>
            <person name="Han C."/>
            <person name="Tapia R."/>
            <person name="Gilna P."/>
            <person name="Schmutz J."/>
            <person name="Larimer F."/>
            <person name="Land M."/>
            <person name="Hauser L."/>
            <person name="Kyrpides N."/>
            <person name="Mikhailova N."/>
            <person name="Richardson P."/>
            <person name="Mackenzie C."/>
            <person name="Choudhary M."/>
            <person name="Donohue T.J."/>
            <person name="Kaplan S."/>
        </authorList>
    </citation>
    <scope>NUCLEOTIDE SEQUENCE [LARGE SCALE GENOMIC DNA]</scope>
    <source>
        <strain>ATCC 17029 / ATH 2.4.9</strain>
    </source>
</reference>
<accession>A3PHH4</accession>
<dbReference type="EC" id="6.3.3.1" evidence="1"/>
<dbReference type="EMBL" id="CP000577">
    <property type="protein sequence ID" value="ABN75790.1"/>
    <property type="molecule type" value="Genomic_DNA"/>
</dbReference>
<dbReference type="RefSeq" id="WP_011840532.1">
    <property type="nucleotide sequence ID" value="NC_009049.1"/>
</dbReference>
<dbReference type="SMR" id="A3PHH4"/>
<dbReference type="KEGG" id="rsh:Rsph17029_0677"/>
<dbReference type="HOGENOM" id="CLU_047116_0_0_5"/>
<dbReference type="UniPathway" id="UPA00074">
    <property type="reaction ID" value="UER00129"/>
</dbReference>
<dbReference type="GO" id="GO:0005829">
    <property type="term" value="C:cytosol"/>
    <property type="evidence" value="ECO:0007669"/>
    <property type="project" value="TreeGrafter"/>
</dbReference>
<dbReference type="GO" id="GO:0005524">
    <property type="term" value="F:ATP binding"/>
    <property type="evidence" value="ECO:0007669"/>
    <property type="project" value="UniProtKB-KW"/>
</dbReference>
<dbReference type="GO" id="GO:0004637">
    <property type="term" value="F:phosphoribosylamine-glycine ligase activity"/>
    <property type="evidence" value="ECO:0007669"/>
    <property type="project" value="TreeGrafter"/>
</dbReference>
<dbReference type="GO" id="GO:0004641">
    <property type="term" value="F:phosphoribosylformylglycinamidine cyclo-ligase activity"/>
    <property type="evidence" value="ECO:0007669"/>
    <property type="project" value="UniProtKB-UniRule"/>
</dbReference>
<dbReference type="GO" id="GO:0006189">
    <property type="term" value="P:'de novo' IMP biosynthetic process"/>
    <property type="evidence" value="ECO:0007669"/>
    <property type="project" value="UniProtKB-UniRule"/>
</dbReference>
<dbReference type="GO" id="GO:0046084">
    <property type="term" value="P:adenine biosynthetic process"/>
    <property type="evidence" value="ECO:0007669"/>
    <property type="project" value="TreeGrafter"/>
</dbReference>
<dbReference type="CDD" id="cd02196">
    <property type="entry name" value="PurM"/>
    <property type="match status" value="1"/>
</dbReference>
<dbReference type="FunFam" id="3.30.1330.10:FF:000001">
    <property type="entry name" value="Phosphoribosylformylglycinamidine cyclo-ligase"/>
    <property type="match status" value="1"/>
</dbReference>
<dbReference type="FunFam" id="3.90.650.10:FF:000011">
    <property type="entry name" value="Phosphoribosylformylglycinamidine cyclo-ligase"/>
    <property type="match status" value="1"/>
</dbReference>
<dbReference type="Gene3D" id="3.90.650.10">
    <property type="entry name" value="PurM-like C-terminal domain"/>
    <property type="match status" value="1"/>
</dbReference>
<dbReference type="Gene3D" id="3.30.1330.10">
    <property type="entry name" value="PurM-like, N-terminal domain"/>
    <property type="match status" value="1"/>
</dbReference>
<dbReference type="HAMAP" id="MF_00741">
    <property type="entry name" value="AIRS"/>
    <property type="match status" value="1"/>
</dbReference>
<dbReference type="InterPro" id="IPR010918">
    <property type="entry name" value="PurM-like_C_dom"/>
</dbReference>
<dbReference type="InterPro" id="IPR036676">
    <property type="entry name" value="PurM-like_C_sf"/>
</dbReference>
<dbReference type="InterPro" id="IPR016188">
    <property type="entry name" value="PurM-like_N"/>
</dbReference>
<dbReference type="InterPro" id="IPR036921">
    <property type="entry name" value="PurM-like_N_sf"/>
</dbReference>
<dbReference type="InterPro" id="IPR004733">
    <property type="entry name" value="PurM_cligase"/>
</dbReference>
<dbReference type="NCBIfam" id="TIGR00878">
    <property type="entry name" value="purM"/>
    <property type="match status" value="1"/>
</dbReference>
<dbReference type="PANTHER" id="PTHR10520:SF12">
    <property type="entry name" value="TRIFUNCTIONAL PURINE BIOSYNTHETIC PROTEIN ADENOSINE-3"/>
    <property type="match status" value="1"/>
</dbReference>
<dbReference type="PANTHER" id="PTHR10520">
    <property type="entry name" value="TRIFUNCTIONAL PURINE BIOSYNTHETIC PROTEIN ADENOSINE-3-RELATED"/>
    <property type="match status" value="1"/>
</dbReference>
<dbReference type="Pfam" id="PF00586">
    <property type="entry name" value="AIRS"/>
    <property type="match status" value="1"/>
</dbReference>
<dbReference type="Pfam" id="PF02769">
    <property type="entry name" value="AIRS_C"/>
    <property type="match status" value="1"/>
</dbReference>
<dbReference type="SUPFAM" id="SSF56042">
    <property type="entry name" value="PurM C-terminal domain-like"/>
    <property type="match status" value="1"/>
</dbReference>
<dbReference type="SUPFAM" id="SSF55326">
    <property type="entry name" value="PurM N-terminal domain-like"/>
    <property type="match status" value="1"/>
</dbReference>
<keyword id="KW-0067">ATP-binding</keyword>
<keyword id="KW-0963">Cytoplasm</keyword>
<keyword id="KW-0436">Ligase</keyword>
<keyword id="KW-0547">Nucleotide-binding</keyword>
<keyword id="KW-0658">Purine biosynthesis</keyword>
<proteinExistence type="inferred from homology"/>
<evidence type="ECO:0000255" key="1">
    <source>
        <dbReference type="HAMAP-Rule" id="MF_00741"/>
    </source>
</evidence>
<protein>
    <recommendedName>
        <fullName evidence="1">Phosphoribosylformylglycinamidine cyclo-ligase</fullName>
        <ecNumber evidence="1">6.3.3.1</ecNumber>
    </recommendedName>
    <alternativeName>
        <fullName evidence="1">AIR synthase</fullName>
    </alternativeName>
    <alternativeName>
        <fullName evidence="1">AIRS</fullName>
    </alternativeName>
    <alternativeName>
        <fullName evidence="1">Phosphoribosyl-aminoimidazole synthetase</fullName>
    </alternativeName>
</protein>
<organism>
    <name type="scientific">Cereibacter sphaeroides (strain ATCC 17029 / ATH 2.4.9)</name>
    <name type="common">Rhodobacter sphaeroides</name>
    <dbReference type="NCBI Taxonomy" id="349101"/>
    <lineage>
        <taxon>Bacteria</taxon>
        <taxon>Pseudomonadati</taxon>
        <taxon>Pseudomonadota</taxon>
        <taxon>Alphaproteobacteria</taxon>
        <taxon>Rhodobacterales</taxon>
        <taxon>Paracoccaceae</taxon>
        <taxon>Cereibacter</taxon>
    </lineage>
</organism>
<sequence length="348" mass="35758">MAEQQKGLTYADAGVDIDAGNALVERIKPAAKRTARPGTVSGLGGFGALFDLKAAGYHDPVLVAATDGVGTKLRIAIDTGEVDTIGIDLVAMCVNDLVCQGAEPLFFLDYFATGKLEVAQAARIIEGIAEGCAASGCALIGGETAEMPGMYHKGDFDLAGFAVGAMERGADLPQGVAEGDVLLGLGSNGVHSNGYSFVRKVVELSGLGWDAPAPFGGDSLGRALLAPTRLYVKQALAAVRAGGVHALAHITGGGLTENLPRVLPEGLGARIDLSAWELPPVFRWLAETASMAEPELLKTFNCGIGMIVVVAADRADEIAALLAAEGETVTRIGEVIAGEGVSYDGRLL</sequence>
<gene>
    <name evidence="1" type="primary">purM</name>
    <name type="ordered locus">Rsph17029_0677</name>
</gene>
<feature type="chain" id="PRO_1000046463" description="Phosphoribosylformylglycinamidine cyclo-ligase">
    <location>
        <begin position="1"/>
        <end position="348"/>
    </location>
</feature>